<gene>
    <name type="primary">CAX3</name>
    <name type="ordered locus">At3g51860</name>
    <name type="ORF">ATEM1.11</name>
</gene>
<comment type="function">
    <text evidence="1 5">Vacuolar cation/proton exchanger (CAX). Translocates Ca(2+) and other metal ions into vacuoles using the proton gradient formed by H(+)-ATPase and H(+)-pyrophosphatase (By similarity). Involved in ion homeostasis in association with CAX1.</text>
</comment>
<comment type="activity regulation">
    <text evidence="4">Inhibited by excess of Ca(2+).</text>
</comment>
<comment type="interaction">
    <interactant intactId="EBI-2292420">
        <id>Q93Z81</id>
    </interactant>
    <interactant intactId="EBI-2292388">
        <id>Q39253</id>
        <label>CAX1</label>
    </interactant>
    <organismsDiffer>false</organismsDiffer>
    <experiments>4</experiments>
</comment>
<comment type="subcellular location">
    <subcellularLocation>
        <location evidence="7">Vacuole membrane</location>
        <topology evidence="7">Multi-pass membrane protein</topology>
    </subcellularLocation>
    <text>Tonoplast.</text>
</comment>
<comment type="tissue specificity">
    <text evidence="3">Expressed in roots, stems and flowers.</text>
</comment>
<comment type="induction">
    <text evidence="3">By Ca(2+), Mg(2+) and Na(+).</text>
</comment>
<comment type="similarity">
    <text evidence="6">Belongs to the Ca(2+):cation antiporter (CaCA) (TC 2.A.19) family. Cation/proton exchanger (CAX) subfamily.</text>
</comment>
<sequence length="459" mass="49851">MGSIVEPWAAIAENGNANVTAKGSSRELRHGRTAHNMSSSSLRKKSDLRLVQKVPCKTLKNILSNLQEVILGTKLTLLFLAIPLAILANSYNYGRPLIFGLSLIGLTPLAERVSFLTEQLAFYTGPTVGGLLNATCGNATELIIAILALANNKVAVVKYSLLGSILSNLLLVLGTSLFFGGIANIRREQRFDRKQADVNFFLLLMGLLCHLLPLLLKYAATGEVSTSMINKMSLTLSRTSSIVMLIAYIAYLIFQLWTHRQLFEAQQDDDDAYDDEVSVEETPVIGFWSGFAWLVGMTIVIALLSEYVVDTIEDASDSWGLSVSFISIILLPIVGNAAEHAGAIIFAFKNKLDISLGVALGSATQISLFVVPLSVIVAWILGIKMDLNFNILETSSLALAIIITAFTLQDGTSHYMKGLVLLLCYVIIAACFFVDQIPQPNDLDVGLQPMNNLGEVFSA</sequence>
<reference key="1">
    <citation type="journal article" date="2000" name="Gene">
        <title>Characterization of CAX-like genes in plants: implications for functional diversity.</title>
        <authorList>
            <person name="Shigaki T."/>
            <person name="Hirschi K.D."/>
        </authorList>
    </citation>
    <scope>NUCLEOTIDE SEQUENCE [MRNA]</scope>
    <scope>TISSUE SPECIFICITY</scope>
    <scope>INDUCTION</scope>
</reference>
<reference key="2">
    <citation type="journal article" date="1999" name="Plant Mol. Biol.">
        <title>Fine sequence analysis of 60 kb around the Arabidopsis thaliana AtEm1 locus on chromosome III.</title>
        <authorList>
            <person name="Comella P."/>
            <person name="Wu H.-J."/>
            <person name="Laudie M."/>
            <person name="Berger C."/>
            <person name="Cooke R."/>
            <person name="Delseny M."/>
            <person name="Grellet F."/>
        </authorList>
    </citation>
    <scope>NUCLEOTIDE SEQUENCE [LARGE SCALE GENOMIC DNA]</scope>
    <source>
        <strain>cv. Columbia</strain>
    </source>
</reference>
<reference key="3">
    <citation type="journal article" date="2017" name="Plant J.">
        <title>Araport11: a complete reannotation of the Arabidopsis thaliana reference genome.</title>
        <authorList>
            <person name="Cheng C.Y."/>
            <person name="Krishnakumar V."/>
            <person name="Chan A.P."/>
            <person name="Thibaud-Nissen F."/>
            <person name="Schobel S."/>
            <person name="Town C.D."/>
        </authorList>
    </citation>
    <scope>GENOME REANNOTATION</scope>
    <source>
        <strain>cv. Columbia</strain>
    </source>
</reference>
<reference key="4">
    <citation type="journal article" date="2003" name="Science">
        <title>Empirical analysis of transcriptional activity in the Arabidopsis genome.</title>
        <authorList>
            <person name="Yamada K."/>
            <person name="Lim J."/>
            <person name="Dale J.M."/>
            <person name="Chen H."/>
            <person name="Shinn P."/>
            <person name="Palm C.J."/>
            <person name="Southwick A.M."/>
            <person name="Wu H.C."/>
            <person name="Kim C.J."/>
            <person name="Nguyen M."/>
            <person name="Pham P.K."/>
            <person name="Cheuk R.F."/>
            <person name="Karlin-Newmann G."/>
            <person name="Liu S.X."/>
            <person name="Lam B."/>
            <person name="Sakano H."/>
            <person name="Wu T."/>
            <person name="Yu G."/>
            <person name="Miranda M."/>
            <person name="Quach H.L."/>
            <person name="Tripp M."/>
            <person name="Chang C.H."/>
            <person name="Lee J.M."/>
            <person name="Toriumi M.J."/>
            <person name="Chan M.M."/>
            <person name="Tang C.C."/>
            <person name="Onodera C.S."/>
            <person name="Deng J.M."/>
            <person name="Akiyama K."/>
            <person name="Ansari Y."/>
            <person name="Arakawa T."/>
            <person name="Banh J."/>
            <person name="Banno F."/>
            <person name="Bowser L."/>
            <person name="Brooks S.Y."/>
            <person name="Carninci P."/>
            <person name="Chao Q."/>
            <person name="Choy N."/>
            <person name="Enju A."/>
            <person name="Goldsmith A.D."/>
            <person name="Gurjal M."/>
            <person name="Hansen N.F."/>
            <person name="Hayashizaki Y."/>
            <person name="Johnson-Hopson C."/>
            <person name="Hsuan V.W."/>
            <person name="Iida K."/>
            <person name="Karnes M."/>
            <person name="Khan S."/>
            <person name="Koesema E."/>
            <person name="Ishida J."/>
            <person name="Jiang P.X."/>
            <person name="Jones T."/>
            <person name="Kawai J."/>
            <person name="Kamiya A."/>
            <person name="Meyers C."/>
            <person name="Nakajima M."/>
            <person name="Narusaka M."/>
            <person name="Seki M."/>
            <person name="Sakurai T."/>
            <person name="Satou M."/>
            <person name="Tamse R."/>
            <person name="Vaysberg M."/>
            <person name="Wallender E.K."/>
            <person name="Wong C."/>
            <person name="Yamamura Y."/>
            <person name="Yuan S."/>
            <person name="Shinozaki K."/>
            <person name="Davis R.W."/>
            <person name="Theologis A."/>
            <person name="Ecker J.R."/>
        </authorList>
    </citation>
    <scope>NUCLEOTIDE SEQUENCE [LARGE SCALE MRNA]</scope>
    <source>
        <strain>cv. Columbia</strain>
    </source>
</reference>
<reference key="5">
    <citation type="submission" date="2004-12" db="EMBL/GenBank/DDBJ databases">
        <title>Arabidopsis ORF clones.</title>
        <authorList>
            <person name="Cheuk R.F."/>
            <person name="Chen H."/>
            <person name="Kim C.J."/>
            <person name="Shinn P."/>
            <person name="Ecker J.R."/>
        </authorList>
    </citation>
    <scope>NUCLEOTIDE SEQUENCE [LARGE SCALE MRNA]</scope>
    <source>
        <strain>cv. Columbia</strain>
    </source>
</reference>
<reference key="6">
    <citation type="submission" date="2006-07" db="EMBL/GenBank/DDBJ databases">
        <title>Large-scale analysis of RIKEN Arabidopsis full-length (RAFL) cDNAs.</title>
        <authorList>
            <person name="Totoki Y."/>
            <person name="Seki M."/>
            <person name="Ishida J."/>
            <person name="Nakajima M."/>
            <person name="Enju A."/>
            <person name="Kamiya A."/>
            <person name="Narusaka M."/>
            <person name="Shin-i T."/>
            <person name="Nakagawa M."/>
            <person name="Sakamoto N."/>
            <person name="Oishi K."/>
            <person name="Kohara Y."/>
            <person name="Kobayashi M."/>
            <person name="Toyoda A."/>
            <person name="Sakaki Y."/>
            <person name="Sakurai T."/>
            <person name="Iida K."/>
            <person name="Akiyama K."/>
            <person name="Satou M."/>
            <person name="Toyoda T."/>
            <person name="Konagaya A."/>
            <person name="Carninci P."/>
            <person name="Kawai J."/>
            <person name="Hayashizaki Y."/>
            <person name="Shinozaki K."/>
        </authorList>
    </citation>
    <scope>NUCLEOTIDE SEQUENCE [LARGE SCALE MRNA] OF 9-459</scope>
    <source>
        <strain>cv. Columbia</strain>
    </source>
</reference>
<reference key="7">
    <citation type="journal article" date="2001" name="J. Biol. Chem.">
        <title>Structural determinants of Ca2+ transport in the Arabidopsis H+/Ca2+ antiporter CAX1.</title>
        <authorList>
            <person name="Shigaki T."/>
            <person name="Cheng N.-H."/>
            <person name="Pittman J.K."/>
            <person name="Hirschi K.D."/>
        </authorList>
    </citation>
    <scope>ACTIVITY REGULATION</scope>
    <scope>MUTAGENESIS OF 87-LYS--ARG-95</scope>
</reference>
<reference key="8">
    <citation type="journal article" date="2001" name="Plant Physiol.">
        <title>Phylogenetic relationships within cation transporter families of Arabidopsis.</title>
        <authorList>
            <person name="Maeser P."/>
            <person name="Thomine S."/>
            <person name="Schroeder J.I."/>
            <person name="Ward J.M."/>
            <person name="Hirschi K."/>
            <person name="Sze H."/>
            <person name="Talke I.N."/>
            <person name="Amtmann A."/>
            <person name="Maathuis F.J.M."/>
            <person name="Sanders D."/>
            <person name="Harper J.F."/>
            <person name="Tchieu J."/>
            <person name="Gribskov M."/>
            <person name="Persans M.W."/>
            <person name="Salt D.E."/>
            <person name="Kim S.A."/>
            <person name="Guerinot M.L."/>
        </authorList>
    </citation>
    <scope>GENE FAMILY</scope>
    <scope>NOMENCLATURE</scope>
</reference>
<reference key="9">
    <citation type="journal article" date="2005" name="Plant Physiol.">
        <title>Functional association of Arabidopsis CAX1 and CAX3 is required for normal growth and ion homeostasis.</title>
        <authorList>
            <person name="Cheng N.-H."/>
            <person name="Pittman J.K."/>
            <person name="Shigaki T."/>
            <person name="Lachmansingh J."/>
            <person name="LeClere S."/>
            <person name="Lahner B."/>
            <person name="Salt D.E."/>
            <person name="Hirschi K.D."/>
        </authorList>
    </citation>
    <scope>FUNCTION</scope>
    <scope>SUBCELLULAR LOCATION</scope>
</reference>
<evidence type="ECO:0000250" key="1"/>
<evidence type="ECO:0000255" key="2"/>
<evidence type="ECO:0000269" key="3">
    <source>
    </source>
</evidence>
<evidence type="ECO:0000269" key="4">
    <source>
    </source>
</evidence>
<evidence type="ECO:0000269" key="5">
    <source>
    </source>
</evidence>
<evidence type="ECO:0000305" key="6"/>
<evidence type="ECO:0000305" key="7">
    <source>
    </source>
</evidence>
<feature type="chain" id="PRO_0000270152" description="Vacuolar cation/proton exchanger 3">
    <location>
        <begin position="1"/>
        <end position="459"/>
    </location>
</feature>
<feature type="topological domain" description="Cytoplasmic" evidence="2">
    <location>
        <begin position="1"/>
        <end position="67"/>
    </location>
</feature>
<feature type="transmembrane region" description="Helical" evidence="2">
    <location>
        <begin position="68"/>
        <end position="88"/>
    </location>
</feature>
<feature type="topological domain" description="Extracellular" evidence="2">
    <location>
        <begin position="89"/>
        <end position="95"/>
    </location>
</feature>
<feature type="transmembrane region" description="Helical" evidence="2">
    <location>
        <begin position="96"/>
        <end position="116"/>
    </location>
</feature>
<feature type="topological domain" description="Cytoplasmic" evidence="2">
    <location>
        <begin position="117"/>
        <end position="129"/>
    </location>
</feature>
<feature type="transmembrane region" description="Helical" evidence="2">
    <location>
        <begin position="130"/>
        <end position="150"/>
    </location>
</feature>
<feature type="topological domain" description="Extracellular" evidence="2">
    <location>
        <begin position="151"/>
        <end position="161"/>
    </location>
</feature>
<feature type="transmembrane region" description="Helical" evidence="2">
    <location>
        <begin position="162"/>
        <end position="182"/>
    </location>
</feature>
<feature type="topological domain" description="Cytoplasmic" evidence="2">
    <location>
        <begin position="183"/>
        <end position="195"/>
    </location>
</feature>
<feature type="transmembrane region" description="Helical" evidence="2">
    <location>
        <begin position="196"/>
        <end position="216"/>
    </location>
</feature>
<feature type="topological domain" description="Extracellular" evidence="2">
    <location>
        <begin position="217"/>
        <end position="238"/>
    </location>
</feature>
<feature type="transmembrane region" description="Helical" evidence="2">
    <location>
        <begin position="239"/>
        <end position="259"/>
    </location>
</feature>
<feature type="topological domain" description="Cytoplasmic" evidence="2">
    <location>
        <begin position="260"/>
        <end position="283"/>
    </location>
</feature>
<feature type="transmembrane region" description="Helical" evidence="2">
    <location>
        <begin position="284"/>
        <end position="304"/>
    </location>
</feature>
<feature type="topological domain" description="Extracellular" evidence="2">
    <location>
        <begin position="305"/>
        <end position="327"/>
    </location>
</feature>
<feature type="transmembrane region" description="Helical" evidence="2">
    <location>
        <begin position="328"/>
        <end position="348"/>
    </location>
</feature>
<feature type="topological domain" description="Cytoplasmic" evidence="2">
    <location>
        <begin position="349"/>
        <end position="362"/>
    </location>
</feature>
<feature type="transmembrane region" description="Helical" evidence="2">
    <location>
        <begin position="363"/>
        <end position="383"/>
    </location>
</feature>
<feature type="topological domain" description="Extracellular" evidence="2">
    <location>
        <begin position="384"/>
        <end position="386"/>
    </location>
</feature>
<feature type="transmembrane region" description="Helical" evidence="2">
    <location>
        <begin position="387"/>
        <end position="407"/>
    </location>
</feature>
<feature type="topological domain" description="Cytoplasmic" evidence="2">
    <location>
        <begin position="408"/>
        <end position="417"/>
    </location>
</feature>
<feature type="transmembrane region" description="Helical" evidence="2">
    <location>
        <begin position="418"/>
        <end position="438"/>
    </location>
</feature>
<feature type="topological domain" description="Extracellular" evidence="2">
    <location>
        <begin position="439"/>
        <end position="459"/>
    </location>
</feature>
<feature type="region of interest" description="Cation selection" evidence="2">
    <location>
        <begin position="137"/>
        <end position="172"/>
    </location>
</feature>
<feature type="region of interest" description="Cation selection" evidence="2">
    <location>
        <begin position="335"/>
        <end position="370"/>
    </location>
</feature>
<feature type="mutagenesis site" description="Facilitates Ca(2+)/H(+) exchange activity." evidence="4">
    <original>LANSYNYGR</original>
    <variation>ICTYCGVSQ</variation>
    <location>
        <begin position="87"/>
        <end position="95"/>
    </location>
</feature>
<feature type="sequence conflict" description="In Ref. 1; AAF91349." evidence="6" ref="1">
    <original>P</original>
    <variation>R</variation>
    <location>
        <position position="126"/>
    </location>
</feature>
<accession>Q93Z81</accession>
<accession>O65022</accession>
<accession>Q0WUY4</accession>
<accession>Q9LKW8</accession>
<organism>
    <name type="scientific">Arabidopsis thaliana</name>
    <name type="common">Mouse-ear cress</name>
    <dbReference type="NCBI Taxonomy" id="3702"/>
    <lineage>
        <taxon>Eukaryota</taxon>
        <taxon>Viridiplantae</taxon>
        <taxon>Streptophyta</taxon>
        <taxon>Embryophyta</taxon>
        <taxon>Tracheophyta</taxon>
        <taxon>Spermatophyta</taxon>
        <taxon>Magnoliopsida</taxon>
        <taxon>eudicotyledons</taxon>
        <taxon>Gunneridae</taxon>
        <taxon>Pentapetalae</taxon>
        <taxon>rosids</taxon>
        <taxon>malvids</taxon>
        <taxon>Brassicales</taxon>
        <taxon>Brassicaceae</taxon>
        <taxon>Camelineae</taxon>
        <taxon>Arabidopsis</taxon>
    </lineage>
</organism>
<name>CAX3_ARATH</name>
<protein>
    <recommendedName>
        <fullName>Vacuolar cation/proton exchanger 3</fullName>
    </recommendedName>
    <alternativeName>
        <fullName>Ca(2+)/H(+) antiporter CAX3</fullName>
    </alternativeName>
    <alternativeName>
        <fullName>Ca(2+)/H(+) exchanger 3</fullName>
    </alternativeName>
    <alternativeName>
        <fullName>Protein CATION EXCHANGER 3</fullName>
    </alternativeName>
</protein>
<proteinExistence type="evidence at protein level"/>
<dbReference type="EMBL" id="AF256228">
    <property type="protein sequence ID" value="AAF91349.1"/>
    <property type="molecule type" value="mRNA"/>
</dbReference>
<dbReference type="EMBL" id="AF049236">
    <property type="protein sequence ID" value="AAC14413.1"/>
    <property type="molecule type" value="Genomic_DNA"/>
</dbReference>
<dbReference type="EMBL" id="CP002686">
    <property type="protein sequence ID" value="AEE78853.1"/>
    <property type="molecule type" value="Genomic_DNA"/>
</dbReference>
<dbReference type="EMBL" id="AY058054">
    <property type="protein sequence ID" value="AAL24162.1"/>
    <property type="molecule type" value="mRNA"/>
</dbReference>
<dbReference type="EMBL" id="BT020374">
    <property type="protein sequence ID" value="AAV85729.1"/>
    <property type="molecule type" value="mRNA"/>
</dbReference>
<dbReference type="EMBL" id="AK226999">
    <property type="protein sequence ID" value="BAE99064.1"/>
    <property type="molecule type" value="mRNA"/>
</dbReference>
<dbReference type="PIR" id="T51157">
    <property type="entry name" value="T51157"/>
</dbReference>
<dbReference type="RefSeq" id="NP_190754.2">
    <property type="nucleotide sequence ID" value="NM_115045.4"/>
</dbReference>
<dbReference type="SMR" id="Q93Z81"/>
<dbReference type="BioGRID" id="9667">
    <property type="interactions" value="1"/>
</dbReference>
<dbReference type="ComplexPortal" id="CPX-1326">
    <property type="entry name" value="CAX1-CAX3 complex"/>
</dbReference>
<dbReference type="ComplexPortal" id="CPX-1600">
    <property type="entry name" value="CAX3 homodimer"/>
</dbReference>
<dbReference type="FunCoup" id="Q93Z81">
    <property type="interactions" value="26"/>
</dbReference>
<dbReference type="IntAct" id="Q93Z81">
    <property type="interactions" value="1"/>
</dbReference>
<dbReference type="STRING" id="3702.Q93Z81"/>
<dbReference type="TCDB" id="2.A.19.2.5">
    <property type="family name" value="the ca(2+):cation antiporter (caca) family"/>
</dbReference>
<dbReference type="GlyGen" id="Q93Z81">
    <property type="glycosylation" value="1 site"/>
</dbReference>
<dbReference type="iPTMnet" id="Q93Z81"/>
<dbReference type="PaxDb" id="3702-AT3G51860.1"/>
<dbReference type="ProteomicsDB" id="222789"/>
<dbReference type="EnsemblPlants" id="AT3G51860.1">
    <property type="protein sequence ID" value="AT3G51860.1"/>
    <property type="gene ID" value="AT3G51860"/>
</dbReference>
<dbReference type="GeneID" id="824349"/>
<dbReference type="Gramene" id="AT3G51860.1">
    <property type="protein sequence ID" value="AT3G51860.1"/>
    <property type="gene ID" value="AT3G51860"/>
</dbReference>
<dbReference type="KEGG" id="ath:AT3G51860"/>
<dbReference type="Araport" id="AT3G51860"/>
<dbReference type="TAIR" id="AT3G51860">
    <property type="gene designation" value="CAX3"/>
</dbReference>
<dbReference type="eggNOG" id="KOG1397">
    <property type="taxonomic scope" value="Eukaryota"/>
</dbReference>
<dbReference type="HOGENOM" id="CLU_008721_2_0_1"/>
<dbReference type="InParanoid" id="Q93Z81"/>
<dbReference type="OMA" id="NVPMTLN"/>
<dbReference type="OrthoDB" id="1699231at2759"/>
<dbReference type="PhylomeDB" id="Q93Z81"/>
<dbReference type="PRO" id="PR:Q93Z81"/>
<dbReference type="Proteomes" id="UP000006548">
    <property type="component" value="Chromosome 3"/>
</dbReference>
<dbReference type="ExpressionAtlas" id="Q93Z81">
    <property type="expression patterns" value="baseline and differential"/>
</dbReference>
<dbReference type="GO" id="GO:0061993">
    <property type="term" value="C:calcium:proton antiporter complex"/>
    <property type="evidence" value="ECO:0000353"/>
    <property type="project" value="ComplexPortal"/>
</dbReference>
<dbReference type="GO" id="GO:0009705">
    <property type="term" value="C:plant-type vacuole membrane"/>
    <property type="evidence" value="ECO:0000314"/>
    <property type="project" value="TAIR"/>
</dbReference>
<dbReference type="GO" id="GO:0005774">
    <property type="term" value="C:vacuolar membrane"/>
    <property type="evidence" value="ECO:0000314"/>
    <property type="project" value="TAIR"/>
</dbReference>
<dbReference type="GO" id="GO:0005773">
    <property type="term" value="C:vacuole"/>
    <property type="evidence" value="ECO:0000314"/>
    <property type="project" value="TAIR"/>
</dbReference>
<dbReference type="GO" id="GO:0015369">
    <property type="term" value="F:calcium:proton antiporter activity"/>
    <property type="evidence" value="ECO:0000314"/>
    <property type="project" value="TAIR"/>
</dbReference>
<dbReference type="GO" id="GO:0006874">
    <property type="term" value="P:intracellular calcium ion homeostasis"/>
    <property type="evidence" value="ECO:0000315"/>
    <property type="project" value="ComplexPortal"/>
</dbReference>
<dbReference type="GO" id="GO:0030026">
    <property type="term" value="P:intracellular manganese ion homeostasis"/>
    <property type="evidence" value="ECO:0000316"/>
    <property type="project" value="TAIR"/>
</dbReference>
<dbReference type="GO" id="GO:0006882">
    <property type="term" value="P:intracellular zinc ion homeostasis"/>
    <property type="evidence" value="ECO:0000316"/>
    <property type="project" value="TAIR"/>
</dbReference>
<dbReference type="GO" id="GO:0010351">
    <property type="term" value="P:lithium ion transport"/>
    <property type="evidence" value="ECO:0000315"/>
    <property type="project" value="ComplexPortal"/>
</dbReference>
<dbReference type="GO" id="GO:0006812">
    <property type="term" value="P:monoatomic cation transport"/>
    <property type="evidence" value="ECO:0000315"/>
    <property type="project" value="ComplexPortal"/>
</dbReference>
<dbReference type="GO" id="GO:0055062">
    <property type="term" value="P:phosphate ion homeostasis"/>
    <property type="evidence" value="ECO:0000316"/>
    <property type="project" value="TAIR"/>
</dbReference>
<dbReference type="GO" id="GO:0006793">
    <property type="term" value="P:phosphorus metabolic process"/>
    <property type="evidence" value="ECO:0000316"/>
    <property type="project" value="TAIR"/>
</dbReference>
<dbReference type="GO" id="GO:0010119">
    <property type="term" value="P:regulation of stomatal movement"/>
    <property type="evidence" value="ECO:0000315"/>
    <property type="project" value="ComplexPortal"/>
</dbReference>
<dbReference type="GO" id="GO:0051592">
    <property type="term" value="P:response to calcium ion"/>
    <property type="evidence" value="ECO:0000315"/>
    <property type="project" value="TAIR"/>
</dbReference>
<dbReference type="GO" id="GO:0009624">
    <property type="term" value="P:response to nematode"/>
    <property type="evidence" value="ECO:0007007"/>
    <property type="project" value="TAIR"/>
</dbReference>
<dbReference type="FunFam" id="1.20.1420.30:FF:000008">
    <property type="entry name" value="Vacuolar cation/proton exchanger"/>
    <property type="match status" value="1"/>
</dbReference>
<dbReference type="FunFam" id="1.20.1420.30:FF:000020">
    <property type="entry name" value="Vacuolar cation/proton exchanger"/>
    <property type="match status" value="1"/>
</dbReference>
<dbReference type="Gene3D" id="1.20.1420.30">
    <property type="entry name" value="NCX, central ion-binding region"/>
    <property type="match status" value="2"/>
</dbReference>
<dbReference type="InterPro" id="IPR004713">
    <property type="entry name" value="CaH_exchang"/>
</dbReference>
<dbReference type="InterPro" id="IPR004798">
    <property type="entry name" value="CAX-like"/>
</dbReference>
<dbReference type="InterPro" id="IPR004837">
    <property type="entry name" value="NaCa_Exmemb"/>
</dbReference>
<dbReference type="InterPro" id="IPR044880">
    <property type="entry name" value="NCX_ion-bd_dom_sf"/>
</dbReference>
<dbReference type="NCBIfam" id="TIGR00846">
    <property type="entry name" value="caca2"/>
    <property type="match status" value="1"/>
</dbReference>
<dbReference type="NCBIfam" id="TIGR00378">
    <property type="entry name" value="cax"/>
    <property type="match status" value="1"/>
</dbReference>
<dbReference type="PANTHER" id="PTHR31503">
    <property type="entry name" value="VACUOLAR CALCIUM ION TRANSPORTER"/>
    <property type="match status" value="1"/>
</dbReference>
<dbReference type="PANTHER" id="PTHR31503:SF1">
    <property type="entry name" value="VACUOLAR CATION_PROTON EXCHANGER 3"/>
    <property type="match status" value="1"/>
</dbReference>
<dbReference type="Pfam" id="PF01699">
    <property type="entry name" value="Na_Ca_ex"/>
    <property type="match status" value="2"/>
</dbReference>
<keyword id="KW-0050">Antiport</keyword>
<keyword id="KW-0106">Calcium</keyword>
<keyword id="KW-0109">Calcium transport</keyword>
<keyword id="KW-0406">Ion transport</keyword>
<keyword id="KW-0472">Membrane</keyword>
<keyword id="KW-1185">Reference proteome</keyword>
<keyword id="KW-0812">Transmembrane</keyword>
<keyword id="KW-1133">Transmembrane helix</keyword>
<keyword id="KW-0813">Transport</keyword>
<keyword id="KW-0926">Vacuole</keyword>